<dbReference type="EMBL" id="AL445064">
    <property type="protein sequence ID" value="CAC11714.1"/>
    <property type="molecule type" value="Genomic_DNA"/>
</dbReference>
<dbReference type="RefSeq" id="WP_010900999.1">
    <property type="nucleotide sequence ID" value="NC_002578.1"/>
</dbReference>
<dbReference type="SMR" id="Q9HKM3"/>
<dbReference type="FunCoup" id="Q9HKM3">
    <property type="interactions" value="66"/>
</dbReference>
<dbReference type="STRING" id="273075.gene:9571794"/>
<dbReference type="PaxDb" id="273075-Ta0574"/>
<dbReference type="EnsemblBacteria" id="CAC11714">
    <property type="protein sequence ID" value="CAC11714"/>
    <property type="gene ID" value="CAC11714"/>
</dbReference>
<dbReference type="KEGG" id="tac:Ta0574"/>
<dbReference type="eggNOG" id="arCOG04229">
    <property type="taxonomic scope" value="Archaea"/>
</dbReference>
<dbReference type="HOGENOM" id="CLU_128576_0_0_2"/>
<dbReference type="InParanoid" id="Q9HKM3"/>
<dbReference type="OrthoDB" id="7000at2157"/>
<dbReference type="Proteomes" id="UP000001024">
    <property type="component" value="Chromosome"/>
</dbReference>
<dbReference type="GO" id="GO:0009347">
    <property type="term" value="C:aspartate carbamoyltransferase complex"/>
    <property type="evidence" value="ECO:0007669"/>
    <property type="project" value="InterPro"/>
</dbReference>
<dbReference type="GO" id="GO:0046872">
    <property type="term" value="F:metal ion binding"/>
    <property type="evidence" value="ECO:0007669"/>
    <property type="project" value="UniProtKB-KW"/>
</dbReference>
<dbReference type="GO" id="GO:0006207">
    <property type="term" value="P:'de novo' pyrimidine nucleobase biosynthetic process"/>
    <property type="evidence" value="ECO:0007669"/>
    <property type="project" value="InterPro"/>
</dbReference>
<dbReference type="GO" id="GO:0006221">
    <property type="term" value="P:pyrimidine nucleotide biosynthetic process"/>
    <property type="evidence" value="ECO:0007669"/>
    <property type="project" value="UniProtKB-UniRule"/>
</dbReference>
<dbReference type="Gene3D" id="2.30.30.20">
    <property type="entry name" value="Aspartate carbamoyltransferase regulatory subunit, C-terminal domain"/>
    <property type="match status" value="1"/>
</dbReference>
<dbReference type="Gene3D" id="3.30.70.140">
    <property type="entry name" value="Aspartate carbamoyltransferase regulatory subunit, N-terminal domain"/>
    <property type="match status" value="1"/>
</dbReference>
<dbReference type="HAMAP" id="MF_00002">
    <property type="entry name" value="Asp_carb_tr_reg"/>
    <property type="match status" value="1"/>
</dbReference>
<dbReference type="InterPro" id="IPR020545">
    <property type="entry name" value="Asp_carbamoyltransf_reg_N"/>
</dbReference>
<dbReference type="InterPro" id="IPR002801">
    <property type="entry name" value="Asp_carbamoylTrfase_reg"/>
</dbReference>
<dbReference type="InterPro" id="IPR020542">
    <property type="entry name" value="Asp_carbamoyltrfase_reg_C"/>
</dbReference>
<dbReference type="InterPro" id="IPR036792">
    <property type="entry name" value="Asp_carbatrfase_reg_C_sf"/>
</dbReference>
<dbReference type="InterPro" id="IPR036793">
    <property type="entry name" value="Asp_carbatrfase_reg_N_sf"/>
</dbReference>
<dbReference type="NCBIfam" id="TIGR00240">
    <property type="entry name" value="ATCase_reg"/>
    <property type="match status" value="1"/>
</dbReference>
<dbReference type="PANTHER" id="PTHR35805">
    <property type="entry name" value="ASPARTATE CARBAMOYLTRANSFERASE REGULATORY CHAIN"/>
    <property type="match status" value="1"/>
</dbReference>
<dbReference type="PANTHER" id="PTHR35805:SF1">
    <property type="entry name" value="ASPARTATE CARBAMOYLTRANSFERASE REGULATORY CHAIN"/>
    <property type="match status" value="1"/>
</dbReference>
<dbReference type="Pfam" id="PF01948">
    <property type="entry name" value="PyrI"/>
    <property type="match status" value="1"/>
</dbReference>
<dbReference type="Pfam" id="PF02748">
    <property type="entry name" value="PyrI_C"/>
    <property type="match status" value="1"/>
</dbReference>
<dbReference type="SUPFAM" id="SSF57825">
    <property type="entry name" value="Aspartate carbamoyltransferase, Regulatory-chain, C-terminal domain"/>
    <property type="match status" value="1"/>
</dbReference>
<dbReference type="SUPFAM" id="SSF54893">
    <property type="entry name" value="Aspartate carbamoyltransferase, Regulatory-chain, N-terminal domain"/>
    <property type="match status" value="1"/>
</dbReference>
<reference key="1">
    <citation type="journal article" date="2000" name="Nature">
        <title>The genome sequence of the thermoacidophilic scavenger Thermoplasma acidophilum.</title>
        <authorList>
            <person name="Ruepp A."/>
            <person name="Graml W."/>
            <person name="Santos-Martinez M.-L."/>
            <person name="Koretke K.K."/>
            <person name="Volker C."/>
            <person name="Mewes H.-W."/>
            <person name="Frishman D."/>
            <person name="Stocker S."/>
            <person name="Lupas A.N."/>
            <person name="Baumeister W."/>
        </authorList>
    </citation>
    <scope>NUCLEOTIDE SEQUENCE [LARGE SCALE GENOMIC DNA]</scope>
    <source>
        <strain>ATCC 25905 / DSM 1728 / JCM 9062 / NBRC 15155 / AMRC-C165</strain>
    </source>
</reference>
<protein>
    <recommendedName>
        <fullName>Aspartate carbamoyltransferase regulatory chain</fullName>
    </recommendedName>
</protein>
<evidence type="ECO:0000250" key="1"/>
<evidence type="ECO:0000305" key="2"/>
<organism>
    <name type="scientific">Thermoplasma acidophilum (strain ATCC 25905 / DSM 1728 / JCM 9062 / NBRC 15155 / AMRC-C165)</name>
    <dbReference type="NCBI Taxonomy" id="273075"/>
    <lineage>
        <taxon>Archaea</taxon>
        <taxon>Methanobacteriati</taxon>
        <taxon>Thermoplasmatota</taxon>
        <taxon>Thermoplasmata</taxon>
        <taxon>Thermoplasmatales</taxon>
        <taxon>Thermoplasmataceae</taxon>
        <taxon>Thermoplasma</taxon>
    </lineage>
</organism>
<sequence length="151" mass="17141">MEKTLRISKIRDGTVIDHVPSGKGIRVIGVLGVHEDVNYTVSLAIHVPSNKMGFKDVIKIENRFLDRNELDMISLIAPNATISIIKNYEISEKFQVELPSRLIGVLKCKNQNCITNTREPVESEFEIVSKHPLVIRCVYCERTMGEKDIFT</sequence>
<proteinExistence type="inferred from homology"/>
<comment type="function">
    <text evidence="1">Involved in allosteric regulation of aspartate carbamoyltransferase.</text>
</comment>
<comment type="cofactor">
    <cofactor evidence="1">
        <name>Zn(2+)</name>
        <dbReference type="ChEBI" id="CHEBI:29105"/>
    </cofactor>
    <text evidence="1">Binds 1 zinc ion per subunit.</text>
</comment>
<comment type="subunit">
    <text evidence="1">Contains catalytic and regulatory chains.</text>
</comment>
<comment type="similarity">
    <text evidence="2">Belongs to the PyrI family.</text>
</comment>
<name>PYRI_THEAC</name>
<accession>Q9HKM3</accession>
<feature type="chain" id="PRO_0000142345" description="Aspartate carbamoyltransferase regulatory chain">
    <location>
        <begin position="1"/>
        <end position="151"/>
    </location>
</feature>
<feature type="binding site" evidence="1">
    <location>
        <position position="108"/>
    </location>
    <ligand>
        <name>Zn(2+)</name>
        <dbReference type="ChEBI" id="CHEBI:29105"/>
    </ligand>
</feature>
<feature type="binding site" evidence="1">
    <location>
        <position position="113"/>
    </location>
    <ligand>
        <name>Zn(2+)</name>
        <dbReference type="ChEBI" id="CHEBI:29105"/>
    </ligand>
</feature>
<feature type="binding site" evidence="1">
    <location>
        <position position="137"/>
    </location>
    <ligand>
        <name>Zn(2+)</name>
        <dbReference type="ChEBI" id="CHEBI:29105"/>
    </ligand>
</feature>
<feature type="binding site" evidence="1">
    <location>
        <position position="140"/>
    </location>
    <ligand>
        <name>Zn(2+)</name>
        <dbReference type="ChEBI" id="CHEBI:29105"/>
    </ligand>
</feature>
<gene>
    <name type="primary">pyrI</name>
    <name type="ordered locus">Ta0574</name>
</gene>
<keyword id="KW-0479">Metal-binding</keyword>
<keyword id="KW-0665">Pyrimidine biosynthesis</keyword>
<keyword id="KW-1185">Reference proteome</keyword>
<keyword id="KW-0862">Zinc</keyword>